<organism>
    <name type="scientific">Arabidopsis thaliana</name>
    <name type="common">Mouse-ear cress</name>
    <dbReference type="NCBI Taxonomy" id="3702"/>
    <lineage>
        <taxon>Eukaryota</taxon>
        <taxon>Viridiplantae</taxon>
        <taxon>Streptophyta</taxon>
        <taxon>Embryophyta</taxon>
        <taxon>Tracheophyta</taxon>
        <taxon>Spermatophyta</taxon>
        <taxon>Magnoliopsida</taxon>
        <taxon>eudicotyledons</taxon>
        <taxon>Gunneridae</taxon>
        <taxon>Pentapetalae</taxon>
        <taxon>rosids</taxon>
        <taxon>malvids</taxon>
        <taxon>Brassicales</taxon>
        <taxon>Brassicaceae</taxon>
        <taxon>Camelineae</taxon>
        <taxon>Arabidopsis</taxon>
    </lineage>
</organism>
<gene>
    <name type="primary">UGT85A3</name>
    <name type="ordered locus">At1g22380</name>
    <name type="ORF">F12K8.28</name>
    <name type="ORF">T16E15.1</name>
</gene>
<sequence length="488" mass="54609">MGSRFVSNEQKPHVVCVPYPAQGHINPMMKVAKLLHVKGFHVTFVNTVYNHNRLLRSRGANALDGLPSFQFESIPDGLPETGVDATQDIPALSESTTKNCLVPFKKLLQRIVTREDVPPVSCIVSDGSMSFTLDVAEELGVPEIHFWTTSACGFMAYLHFYLFIEKGLCPVKDASCLTKEYLDTVIDWIPSMNNVKLKDIPSFIRTTNPNDIMLNFVVREACRTKRASAIILNTFDDLEHDIIQSMQSILPPVYPIGPLHLLVNREIEEDSEIGRMGSNLWKEETECLGWLNTKSRNSVVYVNFGSITIMTTAQLLEFAWGLAATGKEFLWVMRPDSVAGEEAVIPKEFLAETADRRMLTSWCPQEKVLSHPAVGGFLTHCGWNSTLESLSCGVPMVCWPFFAEQQTNCKFSCDEWEVGIEIGGDVKRGEVEAVVRELMDGEKGKKMREKAVEWRRLAEKATKLPCGSSVINFETIVNKVLLGKIPNT</sequence>
<dbReference type="EC" id="2.4.1.-"/>
<dbReference type="EMBL" id="AC006551">
    <property type="status" value="NOT_ANNOTATED_CDS"/>
    <property type="molecule type" value="Genomic_DNA"/>
</dbReference>
<dbReference type="EMBL" id="AC068562">
    <property type="protein sequence ID" value="AAF87254.1"/>
    <property type="molecule type" value="Genomic_DNA"/>
</dbReference>
<dbReference type="EMBL" id="CP002684">
    <property type="protein sequence ID" value="AEE30236.1"/>
    <property type="molecule type" value="Genomic_DNA"/>
</dbReference>
<dbReference type="PIR" id="G86356">
    <property type="entry name" value="G86356"/>
</dbReference>
<dbReference type="RefSeq" id="NP_173655.2">
    <property type="nucleotide sequence ID" value="NM_102088.3"/>
</dbReference>
<dbReference type="SMR" id="Q9LMF1"/>
<dbReference type="FunCoup" id="Q9LMF1">
    <property type="interactions" value="210"/>
</dbReference>
<dbReference type="STRING" id="3702.Q9LMF1"/>
<dbReference type="CAZy" id="GT1">
    <property type="family name" value="Glycosyltransferase Family 1"/>
</dbReference>
<dbReference type="PaxDb" id="3702-AT1G22380.1"/>
<dbReference type="ProteomicsDB" id="228681"/>
<dbReference type="EnsemblPlants" id="AT1G22380.1">
    <property type="protein sequence ID" value="AT1G22380.1"/>
    <property type="gene ID" value="AT1G22380"/>
</dbReference>
<dbReference type="GeneID" id="838845"/>
<dbReference type="Gramene" id="AT1G22380.1">
    <property type="protein sequence ID" value="AT1G22380.1"/>
    <property type="gene ID" value="AT1G22380"/>
</dbReference>
<dbReference type="KEGG" id="ath:AT1G22380"/>
<dbReference type="Araport" id="AT1G22380"/>
<dbReference type="TAIR" id="AT1G22380">
    <property type="gene designation" value="UGT85A3"/>
</dbReference>
<dbReference type="eggNOG" id="KOG1192">
    <property type="taxonomic scope" value="Eukaryota"/>
</dbReference>
<dbReference type="HOGENOM" id="CLU_001724_0_0_1"/>
<dbReference type="InParanoid" id="Q9LMF1"/>
<dbReference type="OMA" id="MGSHVVC"/>
<dbReference type="PRO" id="PR:Q9LMF1"/>
<dbReference type="Proteomes" id="UP000006548">
    <property type="component" value="Chromosome 1"/>
</dbReference>
<dbReference type="ExpressionAtlas" id="Q9LMF1">
    <property type="expression patterns" value="baseline and differential"/>
</dbReference>
<dbReference type="GO" id="GO:0015020">
    <property type="term" value="F:glucuronosyltransferase activity"/>
    <property type="evidence" value="ECO:0000250"/>
    <property type="project" value="TAIR"/>
</dbReference>
<dbReference type="GO" id="GO:0035251">
    <property type="term" value="F:UDP-glucosyltransferase activity"/>
    <property type="evidence" value="ECO:0007669"/>
    <property type="project" value="UniProtKB-ARBA"/>
</dbReference>
<dbReference type="CDD" id="cd03784">
    <property type="entry name" value="GT1_Gtf-like"/>
    <property type="match status" value="1"/>
</dbReference>
<dbReference type="FunFam" id="3.40.50.2000:FF:000027">
    <property type="entry name" value="Glycosyltransferase"/>
    <property type="match status" value="1"/>
</dbReference>
<dbReference type="FunFam" id="3.40.50.2000:FF:000055">
    <property type="entry name" value="Glycosyltransferase"/>
    <property type="match status" value="1"/>
</dbReference>
<dbReference type="Gene3D" id="3.40.50.2000">
    <property type="entry name" value="Glycogen Phosphorylase B"/>
    <property type="match status" value="2"/>
</dbReference>
<dbReference type="InterPro" id="IPR002213">
    <property type="entry name" value="UDP_glucos_trans"/>
</dbReference>
<dbReference type="InterPro" id="IPR035595">
    <property type="entry name" value="UDP_glycos_trans_CS"/>
</dbReference>
<dbReference type="PANTHER" id="PTHR11926">
    <property type="entry name" value="GLUCOSYL/GLUCURONOSYL TRANSFERASES"/>
    <property type="match status" value="1"/>
</dbReference>
<dbReference type="PANTHER" id="PTHR11926:SF774">
    <property type="entry name" value="UDP-GLYCOSYLTRANSFERASE 85A1-RELATED"/>
    <property type="match status" value="1"/>
</dbReference>
<dbReference type="Pfam" id="PF00201">
    <property type="entry name" value="UDPGT"/>
    <property type="match status" value="1"/>
</dbReference>
<dbReference type="SUPFAM" id="SSF53756">
    <property type="entry name" value="UDP-Glycosyltransferase/glycogen phosphorylase"/>
    <property type="match status" value="1"/>
</dbReference>
<dbReference type="PROSITE" id="PS00375">
    <property type="entry name" value="UDPGT"/>
    <property type="match status" value="1"/>
</dbReference>
<keyword id="KW-0328">Glycosyltransferase</keyword>
<keyword id="KW-1185">Reference proteome</keyword>
<keyword id="KW-0808">Transferase</keyword>
<accession>Q9LMF1</accession>
<comment type="tissue specificity">
    <text evidence="2">Expressed in roots and flowers.</text>
</comment>
<comment type="similarity">
    <text evidence="3">Belongs to the UDP-glycosyltransferase family.</text>
</comment>
<protein>
    <recommendedName>
        <fullName>UDP-glycosyltransferase 85A3</fullName>
        <ecNumber>2.4.1.-</ecNumber>
    </recommendedName>
</protein>
<feature type="chain" id="PRO_0000409127" description="UDP-glycosyltransferase 85A3">
    <location>
        <begin position="1"/>
        <end position="488"/>
    </location>
</feature>
<feature type="binding site" evidence="1">
    <location>
        <position position="306"/>
    </location>
    <ligand>
        <name>UDP-alpha-D-glucose</name>
        <dbReference type="ChEBI" id="CHEBI:58885"/>
    </ligand>
</feature>
<feature type="binding site" evidence="1">
    <location>
        <begin position="363"/>
        <end position="365"/>
    </location>
    <ligand>
        <name>UDP-alpha-D-glucose</name>
        <dbReference type="ChEBI" id="CHEBI:58885"/>
    </ligand>
</feature>
<feature type="binding site" evidence="1">
    <location>
        <begin position="380"/>
        <end position="388"/>
    </location>
    <ligand>
        <name>UDP-alpha-D-glucose</name>
        <dbReference type="ChEBI" id="CHEBI:58885"/>
    </ligand>
</feature>
<feature type="binding site" evidence="1">
    <location>
        <begin position="402"/>
        <end position="405"/>
    </location>
    <ligand>
        <name>UDP-alpha-D-glucose</name>
        <dbReference type="ChEBI" id="CHEBI:58885"/>
    </ligand>
</feature>
<name>U85A3_ARATH</name>
<proteinExistence type="evidence at transcript level"/>
<reference key="1">
    <citation type="journal article" date="2000" name="Nature">
        <title>Sequence and analysis of chromosome 1 of the plant Arabidopsis thaliana.</title>
        <authorList>
            <person name="Theologis A."/>
            <person name="Ecker J.R."/>
            <person name="Palm C.J."/>
            <person name="Federspiel N.A."/>
            <person name="Kaul S."/>
            <person name="White O."/>
            <person name="Alonso J."/>
            <person name="Altafi H."/>
            <person name="Araujo R."/>
            <person name="Bowman C.L."/>
            <person name="Brooks S.Y."/>
            <person name="Buehler E."/>
            <person name="Chan A."/>
            <person name="Chao Q."/>
            <person name="Chen H."/>
            <person name="Cheuk R.F."/>
            <person name="Chin C.W."/>
            <person name="Chung M.K."/>
            <person name="Conn L."/>
            <person name="Conway A.B."/>
            <person name="Conway A.R."/>
            <person name="Creasy T.H."/>
            <person name="Dewar K."/>
            <person name="Dunn P."/>
            <person name="Etgu P."/>
            <person name="Feldblyum T.V."/>
            <person name="Feng J.-D."/>
            <person name="Fong B."/>
            <person name="Fujii C.Y."/>
            <person name="Gill J.E."/>
            <person name="Goldsmith A.D."/>
            <person name="Haas B."/>
            <person name="Hansen N.F."/>
            <person name="Hughes B."/>
            <person name="Huizar L."/>
            <person name="Hunter J.L."/>
            <person name="Jenkins J."/>
            <person name="Johnson-Hopson C."/>
            <person name="Khan S."/>
            <person name="Khaykin E."/>
            <person name="Kim C.J."/>
            <person name="Koo H.L."/>
            <person name="Kremenetskaia I."/>
            <person name="Kurtz D.B."/>
            <person name="Kwan A."/>
            <person name="Lam B."/>
            <person name="Langin-Hooper S."/>
            <person name="Lee A."/>
            <person name="Lee J.M."/>
            <person name="Lenz C.A."/>
            <person name="Li J.H."/>
            <person name="Li Y.-P."/>
            <person name="Lin X."/>
            <person name="Liu S.X."/>
            <person name="Liu Z.A."/>
            <person name="Luros J.S."/>
            <person name="Maiti R."/>
            <person name="Marziali A."/>
            <person name="Militscher J."/>
            <person name="Miranda M."/>
            <person name="Nguyen M."/>
            <person name="Nierman W.C."/>
            <person name="Osborne B.I."/>
            <person name="Pai G."/>
            <person name="Peterson J."/>
            <person name="Pham P.K."/>
            <person name="Rizzo M."/>
            <person name="Rooney T."/>
            <person name="Rowley D."/>
            <person name="Sakano H."/>
            <person name="Salzberg S.L."/>
            <person name="Schwartz J.R."/>
            <person name="Shinn P."/>
            <person name="Southwick A.M."/>
            <person name="Sun H."/>
            <person name="Tallon L.J."/>
            <person name="Tambunga G."/>
            <person name="Toriumi M.J."/>
            <person name="Town C.D."/>
            <person name="Utterback T."/>
            <person name="Van Aken S."/>
            <person name="Vaysberg M."/>
            <person name="Vysotskaia V.S."/>
            <person name="Walker M."/>
            <person name="Wu D."/>
            <person name="Yu G."/>
            <person name="Fraser C.M."/>
            <person name="Venter J.C."/>
            <person name="Davis R.W."/>
        </authorList>
    </citation>
    <scope>NUCLEOTIDE SEQUENCE [LARGE SCALE GENOMIC DNA]</scope>
    <source>
        <strain>cv. Columbia</strain>
    </source>
</reference>
<reference key="2">
    <citation type="journal article" date="2017" name="Plant J.">
        <title>Araport11: a complete reannotation of the Arabidopsis thaliana reference genome.</title>
        <authorList>
            <person name="Cheng C.Y."/>
            <person name="Krishnakumar V."/>
            <person name="Chan A.P."/>
            <person name="Thibaud-Nissen F."/>
            <person name="Schobel S."/>
            <person name="Town C.D."/>
        </authorList>
    </citation>
    <scope>GENOME REANNOTATION</scope>
    <source>
        <strain>cv. Columbia</strain>
    </source>
</reference>
<reference key="3">
    <citation type="journal article" date="2001" name="J. Biol. Chem.">
        <title>Phylogenetic analysis of the UDP-glycosyltransferase multigene family of Arabidopsis thaliana.</title>
        <authorList>
            <person name="Li Y."/>
            <person name="Baldauf S."/>
            <person name="Lim E.K."/>
            <person name="Bowles D.J."/>
        </authorList>
    </citation>
    <scope>GENE FAMILY</scope>
</reference>
<reference key="4">
    <citation type="journal article" date="2007" name="Genomics">
        <title>Characterization of Arabidopsis AtUGT85A and AtGUS gene families and their expression in rapidly dividing tissues.</title>
        <authorList>
            <person name="Woo H.H."/>
            <person name="Jeong B.R."/>
            <person name="Hirsch A.M."/>
            <person name="Hawes M.C."/>
        </authorList>
    </citation>
    <scope>TISSUE SPECIFICITY</scope>
</reference>
<evidence type="ECO:0000250" key="1"/>
<evidence type="ECO:0000269" key="2">
    <source>
    </source>
</evidence>
<evidence type="ECO:0000305" key="3"/>